<organism>
    <name type="scientific">Fagopyrum tataricum</name>
    <name type="common">Tartarian buckwheat</name>
    <name type="synonym">Polygonum tataricum</name>
    <dbReference type="NCBI Taxonomy" id="62330"/>
    <lineage>
        <taxon>Eukaryota</taxon>
        <taxon>Viridiplantae</taxon>
        <taxon>Streptophyta</taxon>
        <taxon>Embryophyta</taxon>
        <taxon>Tracheophyta</taxon>
        <taxon>Spermatophyta</taxon>
        <taxon>Magnoliopsida</taxon>
        <taxon>eudicotyledons</taxon>
        <taxon>Gunneridae</taxon>
        <taxon>Pentapetalae</taxon>
        <taxon>Caryophyllales</taxon>
        <taxon>Polygonaceae</taxon>
        <taxon>Polygonoideae</taxon>
        <taxon>Fagopyreae</taxon>
        <taxon>Fagopyrum</taxon>
    </lineage>
</organism>
<evidence type="ECO:0000250" key="1">
    <source>
        <dbReference type="UniProtKB" id="P01051"/>
    </source>
</evidence>
<evidence type="ECO:0000255" key="2"/>
<evidence type="ECO:0000269" key="3">
    <source>
    </source>
</evidence>
<evidence type="ECO:0000303" key="4">
    <source>
    </source>
</evidence>
<evidence type="ECO:0000305" key="5"/>
<comment type="function">
    <text evidence="3">Serine protease inhibitor which is active against trypsin. Displays strong antifungal activity against a number of phytopathogenic fungi including M.melonis, A.cucumerina, A.solani, C.glaeosporioides and P.capsici.</text>
</comment>
<comment type="biophysicochemical properties">
    <phDependence>
        <text evidence="3">Optimum pH is 8.0 at 37 degrees Celsius. Maintains over 90% of its inhibitory activity from pH 3 to 10.</text>
    </phDependence>
    <temperatureDependence>
        <text evidence="3">Active between 10 and 60 degrees Celsius. 84% activity retained when heated for 30 minutes at 80 degrees Celsius. Incubation at temperatures above 80 degrees Celsius rapidly decreases inhibitory activity.</text>
    </temperatureDependence>
</comment>
<comment type="mass spectrometry"/>
<comment type="similarity">
    <text evidence="2">Belongs to the protease inhibitor I13 (potato type I serine protease inhibitor) family.</text>
</comment>
<keyword id="KW-0929">Antimicrobial</keyword>
<keyword id="KW-0903">Direct protein sequencing</keyword>
<keyword id="KW-1015">Disulfide bond</keyword>
<keyword id="KW-0295">Fungicide</keyword>
<keyword id="KW-0611">Plant defense</keyword>
<keyword id="KW-0646">Protease inhibitor</keyword>
<keyword id="KW-0722">Serine protease inhibitor</keyword>
<name>ITI_FAGTA</name>
<accession>P86971</accession>
<proteinExistence type="evidence at protein level"/>
<reference evidence="5" key="1">
    <citation type="journal article" date="2011" name="Appl. Biochem. Biotechnol.">
        <title>Identification and Characterization of a Trypsin Inhibitor from Fagopyrum tataricum Seeds.</title>
        <authorList>
            <person name="Ruan J.J."/>
            <person name="Zhou M.L."/>
            <person name="Chen H."/>
            <person name="Shao J.R."/>
        </authorList>
    </citation>
    <scope>PROTEIN SEQUENCE</scope>
    <scope>FUNCTION</scope>
    <scope>BIOPHYSICOCHEMICAL PROPERTIES</scope>
    <scope>MASS SPECTROMETRY</scope>
    <scope>DISULFIDE BONDS</scope>
    <source>
        <tissue evidence="3">Seed</tissue>
    </source>
</reference>
<sequence>LIYAKVECLTTGVRTYVGKQSWPELVGTKGKTAAATIDKENTHVTAVLCPPLTTLAACRTFDFRCDRVRVLINRIGGVVTKTPTVG</sequence>
<dbReference type="SMR" id="P86971"/>
<dbReference type="GO" id="GO:0004867">
    <property type="term" value="F:serine-type endopeptidase inhibitor activity"/>
    <property type="evidence" value="ECO:0007669"/>
    <property type="project" value="UniProtKB-KW"/>
</dbReference>
<dbReference type="GO" id="GO:0050832">
    <property type="term" value="P:defense response to fungus"/>
    <property type="evidence" value="ECO:0007669"/>
    <property type="project" value="UniProtKB-KW"/>
</dbReference>
<dbReference type="GO" id="GO:0031640">
    <property type="term" value="P:killing of cells of another organism"/>
    <property type="evidence" value="ECO:0007669"/>
    <property type="project" value="UniProtKB-KW"/>
</dbReference>
<dbReference type="GO" id="GO:0009611">
    <property type="term" value="P:response to wounding"/>
    <property type="evidence" value="ECO:0007669"/>
    <property type="project" value="InterPro"/>
</dbReference>
<dbReference type="Gene3D" id="3.30.10.10">
    <property type="entry name" value="Trypsin Inhibitor V, subunit A"/>
    <property type="match status" value="1"/>
</dbReference>
<dbReference type="InterPro" id="IPR000864">
    <property type="entry name" value="Prot_inh_pot1"/>
</dbReference>
<dbReference type="InterPro" id="IPR036354">
    <property type="entry name" value="Prot_inh_pot1_sf"/>
</dbReference>
<dbReference type="PANTHER" id="PTHR33091:SF73">
    <property type="entry name" value="INHIBITOR OF TRYPSIN AND HAGEMAN FACTOR-LIKE"/>
    <property type="match status" value="1"/>
</dbReference>
<dbReference type="PANTHER" id="PTHR33091">
    <property type="entry name" value="PROTEIN, PUTATIVE, EXPRESSED-RELATED"/>
    <property type="match status" value="1"/>
</dbReference>
<dbReference type="Pfam" id="PF00280">
    <property type="entry name" value="potato_inhibit"/>
    <property type="match status" value="1"/>
</dbReference>
<dbReference type="SUPFAM" id="SSF54654">
    <property type="entry name" value="CI-2 family of serine protease inhibitors"/>
    <property type="match status" value="1"/>
</dbReference>
<dbReference type="PROSITE" id="PS00285">
    <property type="entry name" value="POTATO_INHIBITOR"/>
    <property type="match status" value="1"/>
</dbReference>
<protein>
    <recommendedName>
        <fullName evidence="4">Trypsin inhibitor</fullName>
        <shortName evidence="4">FtTI</shortName>
    </recommendedName>
</protein>
<feature type="peptide" id="PRO_0000412717" description="Trypsin inhibitor" evidence="3">
    <location>
        <begin position="1"/>
        <end position="86"/>
    </location>
</feature>
<feature type="site" description="Reactive bond" evidence="1">
    <location>
        <begin position="61"/>
        <end position="62"/>
    </location>
</feature>
<feature type="disulfide bond" evidence="3">
    <location>
        <begin position="8"/>
        <end position="65"/>
    </location>
</feature>
<feature type="disulfide bond" evidence="3">
    <location>
        <begin position="49"/>
        <end position="58"/>
    </location>
</feature>